<gene>
    <name type="primary">rps8</name>
</gene>
<name>RR8_GOSBA</name>
<dbReference type="EMBL" id="AP009123">
    <property type="protein sequence ID" value="BAF41282.1"/>
    <property type="molecule type" value="Genomic_DNA"/>
</dbReference>
<dbReference type="RefSeq" id="YP_913222.1">
    <property type="nucleotide sequence ID" value="NC_008641.1"/>
</dbReference>
<dbReference type="SMR" id="A0ZZ70"/>
<dbReference type="GeneID" id="4575259"/>
<dbReference type="GO" id="GO:0009507">
    <property type="term" value="C:chloroplast"/>
    <property type="evidence" value="ECO:0007669"/>
    <property type="project" value="UniProtKB-SubCell"/>
</dbReference>
<dbReference type="GO" id="GO:1990904">
    <property type="term" value="C:ribonucleoprotein complex"/>
    <property type="evidence" value="ECO:0007669"/>
    <property type="project" value="UniProtKB-KW"/>
</dbReference>
<dbReference type="GO" id="GO:0005840">
    <property type="term" value="C:ribosome"/>
    <property type="evidence" value="ECO:0007669"/>
    <property type="project" value="UniProtKB-KW"/>
</dbReference>
<dbReference type="GO" id="GO:0019843">
    <property type="term" value="F:rRNA binding"/>
    <property type="evidence" value="ECO:0007669"/>
    <property type="project" value="UniProtKB-UniRule"/>
</dbReference>
<dbReference type="GO" id="GO:0003735">
    <property type="term" value="F:structural constituent of ribosome"/>
    <property type="evidence" value="ECO:0007669"/>
    <property type="project" value="InterPro"/>
</dbReference>
<dbReference type="GO" id="GO:0006412">
    <property type="term" value="P:translation"/>
    <property type="evidence" value="ECO:0007669"/>
    <property type="project" value="UniProtKB-UniRule"/>
</dbReference>
<dbReference type="FunFam" id="3.30.1490.10:FF:000001">
    <property type="entry name" value="30S ribosomal protein S8"/>
    <property type="match status" value="1"/>
</dbReference>
<dbReference type="FunFam" id="3.30.1370.30:FF:000004">
    <property type="entry name" value="30S ribosomal protein S8, chloroplastic"/>
    <property type="match status" value="1"/>
</dbReference>
<dbReference type="Gene3D" id="3.30.1370.30">
    <property type="match status" value="1"/>
</dbReference>
<dbReference type="Gene3D" id="3.30.1490.10">
    <property type="match status" value="1"/>
</dbReference>
<dbReference type="HAMAP" id="MF_01302_B">
    <property type="entry name" value="Ribosomal_uS8_B"/>
    <property type="match status" value="1"/>
</dbReference>
<dbReference type="InterPro" id="IPR000630">
    <property type="entry name" value="Ribosomal_uS8"/>
</dbReference>
<dbReference type="InterPro" id="IPR047863">
    <property type="entry name" value="Ribosomal_uS8_CS"/>
</dbReference>
<dbReference type="InterPro" id="IPR035987">
    <property type="entry name" value="Ribosomal_uS8_sf"/>
</dbReference>
<dbReference type="NCBIfam" id="NF001109">
    <property type="entry name" value="PRK00136.1"/>
    <property type="match status" value="1"/>
</dbReference>
<dbReference type="PANTHER" id="PTHR11758">
    <property type="entry name" value="40S RIBOSOMAL PROTEIN S15A"/>
    <property type="match status" value="1"/>
</dbReference>
<dbReference type="Pfam" id="PF00410">
    <property type="entry name" value="Ribosomal_S8"/>
    <property type="match status" value="1"/>
</dbReference>
<dbReference type="SUPFAM" id="SSF56047">
    <property type="entry name" value="Ribosomal protein S8"/>
    <property type="match status" value="1"/>
</dbReference>
<dbReference type="PROSITE" id="PS00053">
    <property type="entry name" value="RIBOSOMAL_S8"/>
    <property type="match status" value="1"/>
</dbReference>
<accession>A0ZZ70</accession>
<comment type="function">
    <text evidence="1">One of the primary rRNA binding proteins, it binds directly to 16S rRNA central domain where it helps coordinate assembly of the platform of the 30S subunit.</text>
</comment>
<comment type="subunit">
    <text evidence="1">Part of the 30S ribosomal subunit.</text>
</comment>
<comment type="subcellular location">
    <subcellularLocation>
        <location>Plastid</location>
        <location>Chloroplast</location>
    </subcellularLocation>
</comment>
<comment type="similarity">
    <text evidence="2">Belongs to the universal ribosomal protein uS8 family.</text>
</comment>
<feature type="chain" id="PRO_0000276722" description="Small ribosomal subunit protein uS8c">
    <location>
        <begin position="1"/>
        <end position="134"/>
    </location>
</feature>
<proteinExistence type="inferred from homology"/>
<geneLocation type="chloroplast"/>
<keyword id="KW-0150">Chloroplast</keyword>
<keyword id="KW-0934">Plastid</keyword>
<keyword id="KW-0687">Ribonucleoprotein</keyword>
<keyword id="KW-0689">Ribosomal protein</keyword>
<keyword id="KW-0694">RNA-binding</keyword>
<keyword id="KW-0699">rRNA-binding</keyword>
<reference key="1">
    <citation type="journal article" date="2006" name="Genes Genet. Syst.">
        <title>Complete nucleotide sequence of the cotton (Gossypium barbadense L.) chloroplast genome with a comparative analysis of sequences among 9 dicot plants.</title>
        <authorList>
            <person name="Ibrahim R.I.H."/>
            <person name="Azuma J."/>
            <person name="Sakamoto M."/>
        </authorList>
    </citation>
    <scope>NUCLEOTIDE SEQUENCE [LARGE SCALE GENOMIC DNA]</scope>
</reference>
<organism>
    <name type="scientific">Gossypium barbadense</name>
    <name type="common">Sea Island cotton</name>
    <name type="synonym">Hibiscus barbadensis</name>
    <dbReference type="NCBI Taxonomy" id="3634"/>
    <lineage>
        <taxon>Eukaryota</taxon>
        <taxon>Viridiplantae</taxon>
        <taxon>Streptophyta</taxon>
        <taxon>Embryophyta</taxon>
        <taxon>Tracheophyta</taxon>
        <taxon>Spermatophyta</taxon>
        <taxon>Magnoliopsida</taxon>
        <taxon>eudicotyledons</taxon>
        <taxon>Gunneridae</taxon>
        <taxon>Pentapetalae</taxon>
        <taxon>rosids</taxon>
        <taxon>malvids</taxon>
        <taxon>Malvales</taxon>
        <taxon>Malvaceae</taxon>
        <taxon>Malvoideae</taxon>
        <taxon>Gossypium</taxon>
    </lineage>
</organism>
<evidence type="ECO:0000250" key="1"/>
<evidence type="ECO:0000305" key="2"/>
<sequence length="134" mass="15498">MGKDTIADIITSIRNADMNRKGTIQIGSTNITENIVQILLREGFIDNVRKHRERNKYFLVLTLRHRRNRKGPHRTILNLRRISRPGLRIYSNYQQIPRILGGMGIVILSTSRGIMTDREARLEGIGGEILCYIW</sequence>
<protein>
    <recommendedName>
        <fullName evidence="2">Small ribosomal subunit protein uS8c</fullName>
    </recommendedName>
    <alternativeName>
        <fullName>30S ribosomal protein S8, chloroplastic</fullName>
    </alternativeName>
</protein>